<reference key="1">
    <citation type="journal article" date="1995" name="Dev. Biol.">
        <title>Cloning, characterization, and development expression of a rat lung alveolar type I cell gene in embryonic endodermal and neural derivatives.</title>
        <authorList>
            <person name="Rishi A.K."/>
            <person name="Joyce-Brady M."/>
            <person name="Fisher J."/>
            <person name="Dobbs L.G."/>
            <person name="Floros J."/>
            <person name="Vanderspek J."/>
            <person name="Brody J.S."/>
            <person name="Williams M.C."/>
        </authorList>
    </citation>
    <scope>NUCLEOTIDE SEQUENCE [MRNA]</scope>
    <source>
        <strain>Sprague-Dawley</strain>
        <tissue>Lung</tissue>
    </source>
</reference>
<reference key="2">
    <citation type="journal article" date="1996" name="Bone">
        <title>Characterization and cloning of the E11 antigen, a marker expressed by rat osteoblasts and osteocytes.</title>
        <authorList>
            <person name="Wetterwald A."/>
            <person name="Hoffstetter W."/>
            <person name="Cecchini M.G."/>
            <person name="Lanske B."/>
            <person name="Wagner C."/>
            <person name="Fleisch H."/>
            <person name="Atkinson M."/>
        </authorList>
    </citation>
    <scope>NUCLEOTIDE SEQUENCE [MRNA]</scope>
    <source>
        <tissue>Osteosarcoma</tissue>
    </source>
</reference>
<reference key="3">
    <citation type="journal article" date="1997" name="Am. J. Pathol.">
        <title>Podoplanin, novel 43-kd membrane protein of glomerular epithelial cells, is down-regulated in puromycin nephrosis.</title>
        <authorList>
            <person name="Breiteneder-Geleff S."/>
            <person name="Matsui K."/>
            <person name="Soleiman A."/>
            <person name="Meraner P."/>
            <person name="Poczewski H."/>
            <person name="Kalt R."/>
            <person name="Schaffner G."/>
            <person name="Kerjaschki D."/>
        </authorList>
    </citation>
    <scope>NUCLEOTIDE SEQUENCE [MRNA]</scope>
    <scope>SUBCELLULAR LOCATION</scope>
    <scope>TISSUE SPECIFICITY</scope>
    <scope>DEVELOPMENTAL STAGE</scope>
    <scope>DOWN-REGULATION IN PAN</scope>
    <source>
        <strain>Sprague-Dawley</strain>
        <tissue>Kidney</tissue>
    </source>
</reference>
<reference key="4">
    <citation type="journal article" date="1998" name="Am. J. Respir. Cell Mol. Biol.">
        <title>Characterization of the gene and promoter for RTI40, a differentiation marker of type I alveolar epithelial cells.</title>
        <authorList>
            <person name="Vanderbilt J.N."/>
            <person name="Dobbs L.G."/>
        </authorList>
    </citation>
    <scope>NUCLEOTIDE SEQUENCE [GENOMIC DNA]</scope>
    <scope>TISSUE SPECIFICITY</scope>
    <source>
        <strain>Sprague-Dawley</strain>
    </source>
</reference>
<reference key="5">
    <citation type="journal article" date="2004" name="Genome Res.">
        <title>The status, quality, and expansion of the NIH full-length cDNA project: the Mammalian Gene Collection (MGC).</title>
        <authorList>
            <consortium name="The MGC Project Team"/>
        </authorList>
    </citation>
    <scope>NUCLEOTIDE SEQUENCE [LARGE SCALE MRNA]</scope>
    <source>
        <tissue>Lung</tissue>
    </source>
</reference>
<reference key="6">
    <citation type="journal article" date="1998" name="Biochim. Biophys. Acta">
        <title>Purification and analysis of RTI40, a type I alveolar epithelial cell apical membrane protein.</title>
        <authorList>
            <person name="Gonzalez R.F."/>
            <person name="Dobbs L.G."/>
        </authorList>
    </citation>
    <scope>PROTEIN SEQUENCE OF 41-55</scope>
    <scope>GLYCOSYLATION</scope>
    <scope>BLOCKAGE OF N-TERMINUS</scope>
</reference>
<dbReference type="EMBL" id="U07797">
    <property type="protein sequence ID" value="AAA92789.1"/>
    <property type="molecule type" value="mRNA"/>
</dbReference>
<dbReference type="EMBL" id="U32115">
    <property type="protein sequence ID" value="AAA74431.1"/>
    <property type="molecule type" value="mRNA"/>
</dbReference>
<dbReference type="EMBL" id="U96449">
    <property type="protein sequence ID" value="AAB86438.1"/>
    <property type="molecule type" value="mRNA"/>
</dbReference>
<dbReference type="EMBL" id="U92440">
    <property type="protein sequence ID" value="AAB93880.1"/>
    <property type="molecule type" value="Genomic_DNA"/>
</dbReference>
<dbReference type="EMBL" id="U92081">
    <property type="protein sequence ID" value="AAB93880.1"/>
    <property type="status" value="JOINED"/>
    <property type="molecule type" value="Genomic_DNA"/>
</dbReference>
<dbReference type="EMBL" id="BC072492">
    <property type="protein sequence ID" value="AAH72492.1"/>
    <property type="molecule type" value="mRNA"/>
</dbReference>
<dbReference type="RefSeq" id="NP_062231.1">
    <property type="nucleotide sequence ID" value="NM_019358.1"/>
</dbReference>
<dbReference type="SMR" id="Q64294"/>
<dbReference type="CORUM" id="Q64294"/>
<dbReference type="FunCoup" id="Q64294">
    <property type="interactions" value="124"/>
</dbReference>
<dbReference type="STRING" id="10116.ENSRNOP00000020316"/>
<dbReference type="GlyCosmos" id="Q64294">
    <property type="glycosylation" value="18 sites, No reported glycans"/>
</dbReference>
<dbReference type="GlyGen" id="Q64294">
    <property type="glycosylation" value="18 sites"/>
</dbReference>
<dbReference type="PhosphoSitePlus" id="Q64294"/>
<dbReference type="PaxDb" id="10116-ENSRNOP00000020316"/>
<dbReference type="GeneID" id="54320"/>
<dbReference type="KEGG" id="rno:54320"/>
<dbReference type="UCSC" id="RGD:61819">
    <property type="organism name" value="rat"/>
</dbReference>
<dbReference type="AGR" id="RGD:61819"/>
<dbReference type="CTD" id="10630"/>
<dbReference type="RGD" id="61819">
    <property type="gene designation" value="Pdpn"/>
</dbReference>
<dbReference type="eggNOG" id="ENOG502QRWU">
    <property type="taxonomic scope" value="Eukaryota"/>
</dbReference>
<dbReference type="InParanoid" id="Q64294"/>
<dbReference type="PhylomeDB" id="Q64294"/>
<dbReference type="TreeFam" id="TF337068"/>
<dbReference type="Reactome" id="R-RNO-114604">
    <property type="pathway name" value="GPVI-mediated activation cascade"/>
</dbReference>
<dbReference type="PRO" id="PR:Q64294"/>
<dbReference type="Proteomes" id="UP000002494">
    <property type="component" value="Unplaced"/>
</dbReference>
<dbReference type="GO" id="GO:0070161">
    <property type="term" value="C:anchoring junction"/>
    <property type="evidence" value="ECO:0007669"/>
    <property type="project" value="UniProtKB-KW"/>
</dbReference>
<dbReference type="GO" id="GO:0016324">
    <property type="term" value="C:apical plasma membrane"/>
    <property type="evidence" value="ECO:0000314"/>
    <property type="project" value="RGD"/>
</dbReference>
<dbReference type="GO" id="GO:0016323">
    <property type="term" value="C:basolateral plasma membrane"/>
    <property type="evidence" value="ECO:0000250"/>
    <property type="project" value="UniProtKB"/>
</dbReference>
<dbReference type="GO" id="GO:0042995">
    <property type="term" value="C:cell projection"/>
    <property type="evidence" value="ECO:0000250"/>
    <property type="project" value="UniProtKB"/>
</dbReference>
<dbReference type="GO" id="GO:0031410">
    <property type="term" value="C:cytoplasmic vesicle"/>
    <property type="evidence" value="ECO:0000250"/>
    <property type="project" value="UniProtKB"/>
</dbReference>
<dbReference type="GO" id="GO:0005829">
    <property type="term" value="C:cytosol"/>
    <property type="evidence" value="ECO:0000250"/>
    <property type="project" value="UniProtKB"/>
</dbReference>
<dbReference type="GO" id="GO:0009897">
    <property type="term" value="C:external side of plasma membrane"/>
    <property type="evidence" value="ECO:0000266"/>
    <property type="project" value="RGD"/>
</dbReference>
<dbReference type="GO" id="GO:0030175">
    <property type="term" value="C:filopodium"/>
    <property type="evidence" value="ECO:0000250"/>
    <property type="project" value="UniProtKB"/>
</dbReference>
<dbReference type="GO" id="GO:0031527">
    <property type="term" value="C:filopodium membrane"/>
    <property type="evidence" value="ECO:0000250"/>
    <property type="project" value="UniProtKB"/>
</dbReference>
<dbReference type="GO" id="GO:0030027">
    <property type="term" value="C:lamellipodium"/>
    <property type="evidence" value="ECO:0000250"/>
    <property type="project" value="UniProtKB"/>
</dbReference>
<dbReference type="GO" id="GO:0031258">
    <property type="term" value="C:lamellipodium membrane"/>
    <property type="evidence" value="ECO:0000250"/>
    <property type="project" value="UniProtKB"/>
</dbReference>
<dbReference type="GO" id="GO:0061851">
    <property type="term" value="C:leading edge of lamellipodium"/>
    <property type="evidence" value="ECO:0000250"/>
    <property type="project" value="UniProtKB"/>
</dbReference>
<dbReference type="GO" id="GO:0016020">
    <property type="term" value="C:membrane"/>
    <property type="evidence" value="ECO:0000266"/>
    <property type="project" value="RGD"/>
</dbReference>
<dbReference type="GO" id="GO:0045121">
    <property type="term" value="C:membrane raft"/>
    <property type="evidence" value="ECO:0000250"/>
    <property type="project" value="UniProtKB"/>
</dbReference>
<dbReference type="GO" id="GO:0031528">
    <property type="term" value="C:microvillus membrane"/>
    <property type="evidence" value="ECO:0000250"/>
    <property type="project" value="UniProtKB"/>
</dbReference>
<dbReference type="GO" id="GO:0005886">
    <property type="term" value="C:plasma membrane"/>
    <property type="evidence" value="ECO:0000250"/>
    <property type="project" value="UniProtKB"/>
</dbReference>
<dbReference type="GO" id="GO:0001726">
    <property type="term" value="C:ruffle"/>
    <property type="evidence" value="ECO:0000250"/>
    <property type="project" value="UniProtKB"/>
</dbReference>
<dbReference type="GO" id="GO:0032587">
    <property type="term" value="C:ruffle membrane"/>
    <property type="evidence" value="ECO:0000250"/>
    <property type="project" value="UniProtKB"/>
</dbReference>
<dbReference type="GO" id="GO:0097197">
    <property type="term" value="C:tetraspanin-enriched microdomain"/>
    <property type="evidence" value="ECO:0000250"/>
    <property type="project" value="UniProtKB"/>
</dbReference>
<dbReference type="GO" id="GO:0019956">
    <property type="term" value="F:chemokine binding"/>
    <property type="evidence" value="ECO:0000266"/>
    <property type="project" value="RGD"/>
</dbReference>
<dbReference type="GO" id="GO:0051087">
    <property type="term" value="F:protein-folding chaperone binding"/>
    <property type="evidence" value="ECO:0000266"/>
    <property type="project" value="RGD"/>
</dbReference>
<dbReference type="GO" id="GO:0005102">
    <property type="term" value="F:signaling receptor binding"/>
    <property type="evidence" value="ECO:0000250"/>
    <property type="project" value="UniProtKB"/>
</dbReference>
<dbReference type="GO" id="GO:0070252">
    <property type="term" value="P:actin-mediated cell contraction"/>
    <property type="evidence" value="ECO:0000250"/>
    <property type="project" value="UniProtKB"/>
</dbReference>
<dbReference type="GO" id="GO:0007155">
    <property type="term" value="P:cell adhesion"/>
    <property type="evidence" value="ECO:0000314"/>
    <property type="project" value="MGI"/>
</dbReference>
<dbReference type="GO" id="GO:0016477">
    <property type="term" value="P:cell migration"/>
    <property type="evidence" value="ECO:0000250"/>
    <property type="project" value="UniProtKB"/>
</dbReference>
<dbReference type="GO" id="GO:0008283">
    <property type="term" value="P:cell population proliferation"/>
    <property type="evidence" value="ECO:0000266"/>
    <property type="project" value="RGD"/>
</dbReference>
<dbReference type="GO" id="GO:0098609">
    <property type="term" value="P:cell-cell adhesion"/>
    <property type="evidence" value="ECO:0000266"/>
    <property type="project" value="RGD"/>
</dbReference>
<dbReference type="GO" id="GO:0048286">
    <property type="term" value="P:lung alveolus development"/>
    <property type="evidence" value="ECO:0000266"/>
    <property type="project" value="RGD"/>
</dbReference>
<dbReference type="GO" id="GO:0030324">
    <property type="term" value="P:lung development"/>
    <property type="evidence" value="ECO:0000270"/>
    <property type="project" value="RGD"/>
</dbReference>
<dbReference type="GO" id="GO:0048535">
    <property type="term" value="P:lymph node development"/>
    <property type="evidence" value="ECO:0000250"/>
    <property type="project" value="UniProtKB"/>
</dbReference>
<dbReference type="GO" id="GO:0001946">
    <property type="term" value="P:lymphangiogenesis"/>
    <property type="evidence" value="ECO:0000250"/>
    <property type="project" value="UniProtKB"/>
</dbReference>
<dbReference type="GO" id="GO:0060838">
    <property type="term" value="P:lymphatic endothelial cell fate commitment"/>
    <property type="evidence" value="ECO:0000250"/>
    <property type="project" value="UniProtKB"/>
</dbReference>
<dbReference type="GO" id="GO:0043066">
    <property type="term" value="P:negative regulation of apoptotic process"/>
    <property type="evidence" value="ECO:0000250"/>
    <property type="project" value="UniProtKB"/>
</dbReference>
<dbReference type="GO" id="GO:0008285">
    <property type="term" value="P:negative regulation of cell population proliferation"/>
    <property type="evidence" value="ECO:0000250"/>
    <property type="project" value="UniProtKB"/>
</dbReference>
<dbReference type="GO" id="GO:0007399">
    <property type="term" value="P:nervous system development"/>
    <property type="evidence" value="ECO:0000270"/>
    <property type="project" value="RGD"/>
</dbReference>
<dbReference type="GO" id="GO:0030335">
    <property type="term" value="P:positive regulation of cell migration"/>
    <property type="evidence" value="ECO:0000314"/>
    <property type="project" value="MGI"/>
</dbReference>
<dbReference type="GO" id="GO:2000147">
    <property type="term" value="P:positive regulation of cell motility"/>
    <property type="evidence" value="ECO:0000266"/>
    <property type="project" value="RGD"/>
</dbReference>
<dbReference type="GO" id="GO:0010718">
    <property type="term" value="P:positive regulation of epithelial to mesenchymal transition"/>
    <property type="evidence" value="ECO:0000250"/>
    <property type="project" value="UniProtKB"/>
</dbReference>
<dbReference type="GO" id="GO:0090091">
    <property type="term" value="P:positive regulation of extracellular matrix disassembly"/>
    <property type="evidence" value="ECO:0000250"/>
    <property type="project" value="UniProtKB"/>
</dbReference>
<dbReference type="GO" id="GO:0010572">
    <property type="term" value="P:positive regulation of platelet activation"/>
    <property type="evidence" value="ECO:0000315"/>
    <property type="project" value="RGD"/>
</dbReference>
<dbReference type="GO" id="GO:1901731">
    <property type="term" value="P:positive regulation of platelet aggregation"/>
    <property type="evidence" value="ECO:0000250"/>
    <property type="project" value="UniProtKB"/>
</dbReference>
<dbReference type="GO" id="GO:0006693">
    <property type="term" value="P:prostaglandin metabolic process"/>
    <property type="evidence" value="ECO:0000266"/>
    <property type="project" value="RGD"/>
</dbReference>
<dbReference type="GO" id="GO:0030155">
    <property type="term" value="P:regulation of cell adhesion"/>
    <property type="evidence" value="ECO:0000250"/>
    <property type="project" value="UniProtKB"/>
</dbReference>
<dbReference type="GO" id="GO:0008360">
    <property type="term" value="P:regulation of cell shape"/>
    <property type="evidence" value="ECO:0007669"/>
    <property type="project" value="UniProtKB-KW"/>
</dbReference>
<dbReference type="GO" id="GO:2000045">
    <property type="term" value="P:regulation of G1/S transition of mitotic cell cycle"/>
    <property type="evidence" value="ECO:0000266"/>
    <property type="project" value="RGD"/>
</dbReference>
<dbReference type="GO" id="GO:2000392">
    <property type="term" value="P:regulation of lamellipodium morphogenesis"/>
    <property type="evidence" value="ECO:0000250"/>
    <property type="project" value="UniProtKB"/>
</dbReference>
<dbReference type="GO" id="GO:1904328">
    <property type="term" value="P:regulation of myofibroblast contraction"/>
    <property type="evidence" value="ECO:0000250"/>
    <property type="project" value="UniProtKB"/>
</dbReference>
<dbReference type="GO" id="GO:1900024">
    <property type="term" value="P:regulation of substrate adhesion-dependent cell spreading"/>
    <property type="evidence" value="ECO:0000250"/>
    <property type="project" value="UniProtKB"/>
</dbReference>
<dbReference type="GO" id="GO:0055093">
    <property type="term" value="P:response to hyperoxia"/>
    <property type="evidence" value="ECO:0000270"/>
    <property type="project" value="RGD"/>
</dbReference>
<dbReference type="GO" id="GO:0007266">
    <property type="term" value="P:Rho protein signal transduction"/>
    <property type="evidence" value="ECO:0000250"/>
    <property type="project" value="UniProtKB"/>
</dbReference>
<dbReference type="GO" id="GO:0007165">
    <property type="term" value="P:signal transduction"/>
    <property type="evidence" value="ECO:0000266"/>
    <property type="project" value="RGD"/>
</dbReference>
<dbReference type="GO" id="GO:0035239">
    <property type="term" value="P:tube morphogenesis"/>
    <property type="evidence" value="ECO:0000314"/>
    <property type="project" value="MGI"/>
</dbReference>
<dbReference type="GO" id="GO:0044319">
    <property type="term" value="P:wound healing, spreading of cells"/>
    <property type="evidence" value="ECO:0000250"/>
    <property type="project" value="UniProtKB"/>
</dbReference>
<dbReference type="InterPro" id="IPR052684">
    <property type="entry name" value="Podoplanin_domain"/>
</dbReference>
<dbReference type="PANTHER" id="PTHR47390">
    <property type="entry name" value="PODOPLANIN"/>
    <property type="match status" value="1"/>
</dbReference>
<dbReference type="PANTHER" id="PTHR47390:SF1">
    <property type="entry name" value="PODOPLANIN"/>
    <property type="match status" value="1"/>
</dbReference>
<dbReference type="Pfam" id="PF05808">
    <property type="entry name" value="Podoplanin"/>
    <property type="match status" value="1"/>
</dbReference>
<keyword id="KW-0965">Cell junction</keyword>
<keyword id="KW-1003">Cell membrane</keyword>
<keyword id="KW-0966">Cell projection</keyword>
<keyword id="KW-0133">Cell shape</keyword>
<keyword id="KW-0217">Developmental protein</keyword>
<keyword id="KW-0903">Direct protein sequencing</keyword>
<keyword id="KW-0325">Glycoprotein</keyword>
<keyword id="KW-0472">Membrane</keyword>
<keyword id="KW-1185">Reference proteome</keyword>
<keyword id="KW-0730">Sialic acid</keyword>
<keyword id="KW-0732">Signal</keyword>
<keyword id="KW-0812">Transmembrane</keyword>
<keyword id="KW-1133">Transmembrane helix</keyword>
<proteinExistence type="evidence at protein level"/>
<protein>
    <recommendedName>
        <fullName evidence="10">Podoplanin</fullName>
    </recommendedName>
    <alternativeName>
        <fullName evidence="9">E11 antigen epitope</fullName>
    </alternativeName>
    <alternativeName>
        <fullName evidence="11 12">RTI140</fullName>
    </alternativeName>
    <alternativeName>
        <fullName evidence="8">T1-alpha</fullName>
        <shortName evidence="8">T1A</shortName>
    </alternativeName>
    <alternativeName>
        <fullName>Type I cell 40 kDa protein</fullName>
    </alternativeName>
</protein>
<comment type="function">
    <text evidence="1 2">Mediates effects on cell migration and adhesion through its different partners. During development plays a role in blood and lymphatic vessels separation by binding CLEC1B, triggering CLEC1B activation in platelets and leading to platelet activation and/or aggregation. Interaction with CD9, on the contrary, attenuates platelet aggregation and pulmonary metastasis induced by PDPN. Mediates effects on cell migration and adhesion through its different partners. Through MSN or EZR interaction promotes epithelial-mesenchymal transition (EMT) leading to ERZ phosphorylation and triggering RHOA activation leading to cell migration increase and invasiveness. Interaction with CD44 promotes directional cell migration in epithelial and tumor cells (By similarity). In lymph nodes (LNs), controls fibroblastic reticular cells (FRCs) adhesion to the extracellular matrix (ECM) and contraction of the actomyosin by maintaining ERM proteins (EZR; MSN and RDX) and MYL9 activation through association with unknown transmembrane proteins. Engagement of CLEC1B by PDPN promotes FRCs relaxation by blocking lateral membrane interactions leading to reduction of ERM proteins (EZR; MSN and RDX) and MYL9 activation (By similarity). Through binding with LGALS8 may participate in connection of the lymphatic endothelium to the surrounding extracellular matrix. In keratinocytes, induces changes in cell morphology showing an elongated shape, numerous membrane protrusions, major reorganization of the actin cytoskeleton, increased motility and decreased cell adhesion. Controls invadopodia stability and maturation leading to efficient degradation of the extracellular matrix (ECM) in tumor cells through modulation of RHOC activity in order to activate ROCK1/ROCK2 and LIMK1/LIMK2 and inactivation of CFL1 (By similarity). Required for normal lung cell proliferation and alveolus formation at birth (By similarity). Does not function as a water channel or as a regulator of aquaporin-type water channels (By similarity). Does not have any effect on folic acid or amino acid transport (By similarity).</text>
</comment>
<comment type="subunit">
    <text evidence="2">Homodimer. Interacts with CLEC1B; the interaction is independent of CLEC1B glycosylation and activates CLEC1B; the interaction is dependent of sialic acid on O-glycans. Interacts with CD9; this interaction is homophilic and attenuates platelet aggregation and pulmonary metastasis induced by PDPN. Interacts with LGALS8; the interaction is glycosylation-dependent; may participate in connection of the lymphatic endothelium to the surrounding extracellular matrix. Interacts with HSPA9. Interacts (via extracellular domain) with CD44; this interaction is required for PDPN-mediated directional migration and regulation of lamellipodia extension/stabilization during cell spreading and migration. Interacts (via cytoplasmic domain) with MSN and EZR; activates RHOA and promotes epithelial-mesenchymal transition. Interacts with CCL21; relocalized PDPN to the basolateral membrane.</text>
</comment>
<comment type="subcellular location">
    <subcellularLocation>
        <location evidence="5">Membrane</location>
        <topology evidence="3">Single-pass type I membrane protein</topology>
    </subcellularLocation>
    <subcellularLocation>
        <location evidence="5">Cell projection</location>
        <location evidence="5">Lamellipodium membrane</location>
        <topology evidence="3">Single-pass type I membrane protein</topology>
    </subcellularLocation>
    <subcellularLocation>
        <location evidence="5">Cell projection</location>
        <location evidence="5">Filopodium membrane</location>
        <topology evidence="3">Single-pass type I membrane protein</topology>
    </subcellularLocation>
    <subcellularLocation>
        <location evidence="5">Cell projection</location>
        <location evidence="5">Microvillus membrane</location>
        <topology evidence="3">Single-pass type I membrane protein</topology>
    </subcellularLocation>
    <subcellularLocation>
        <location evidence="5">Cell projection</location>
        <location evidence="5">Ruffle membrane</location>
        <topology evidence="3">Single-pass type I membrane protein</topology>
    </subcellularLocation>
    <subcellularLocation>
        <location evidence="2">Membrane raft</location>
    </subcellularLocation>
    <subcellularLocation>
        <location evidence="2">Apical cell membrane</location>
    </subcellularLocation>
    <subcellularLocation>
        <location evidence="2">Basolateral cell membrane</location>
    </subcellularLocation>
    <subcellularLocation>
        <location evidence="2">Cell projection</location>
        <location evidence="2">Invadopodium</location>
    </subcellularLocation>
    <text evidence="2 5">Localized to actin-rich microvilli and plasma membrane projections such as filopodia, lamellipodia and ruffles (PubMed:9327748). Association to the lipid rafts is required for PDPN-induced epithelial to mesenchymal transition (EMT). Colocalizes with CD9 in tetraspanin microdomains. Localized at invadopodium adhesion rings in tumor cell. Association to the lipid rafts is essential for PDPN recruitment to invadopodia and ECM degradation (By similarity).</text>
</comment>
<comment type="tissue specificity">
    <text evidence="5 6">In adult kidney, expressed on the urinary surface and foot processes of podocytes and in parietal epithelial cells of Bowman's capsule where it is localized to luminal surfaces. In lung, expressed exclusively on luminal surfaces of type I alveolar epithelial cells and pleural mesothelial cells. Not expressed in type II alveolar cells. In bone, expressed in osteocytes and osteoblasts. In spleen, liver, stomach and intestine, expressed in mesoepithelium. Also expressed in thymic epithelial cells, choroid plexus and leptomeninges.</text>
</comment>
<comment type="developmental stage">
    <text evidence="5">In newborn kidney, not detected at the vesicle stage. First detected in S-shaped bodies.</text>
</comment>
<comment type="domain">
    <text evidence="1 2">The cytoplasmic domain controls FRC elongation but is dispensable for contraction (By similarity). The cytoplasmic domain is essential for recruitment to invadopodia and ECM degradation (By similarity).</text>
</comment>
<comment type="PTM">
    <text evidence="2 7">Extensively O-glycosylated. Contains sialic acid residues. O-glycosylation is necessary for platelet aggregation activity. Disialylated at Thr-52; sialic acid is critical for platelet-aggregating activity and for CLEC1B interaction (By similarity).</text>
</comment>
<comment type="PTM">
    <text evidence="7">The N-terminus is blocked.</text>
</comment>
<comment type="miscellaneous">
    <text>Down-regulated in puromycin aminonucleoside nephrosis (PAN).</text>
</comment>
<comment type="similarity">
    <text evidence="13">Belongs to the podoplanin family.</text>
</comment>
<accession>Q64294</accession>
<accession>O08731</accession>
<accession>O55210</accession>
<gene>
    <name evidence="14" type="primary">Pdpn</name>
</gene>
<feature type="signal peptide" evidence="2">
    <location>
        <begin position="1"/>
        <end position="22"/>
    </location>
</feature>
<feature type="chain" id="PRO_0000021353" description="Podoplanin">
    <location>
        <begin position="23"/>
        <end position="166"/>
    </location>
</feature>
<feature type="topological domain" description="Extracellular" evidence="3">
    <location>
        <begin position="23"/>
        <end position="135"/>
    </location>
</feature>
<feature type="transmembrane region" description="Helical" evidence="3">
    <location>
        <begin position="136"/>
        <end position="156"/>
    </location>
</feature>
<feature type="topological domain" description="Cytoplasmic" evidence="3">
    <location>
        <begin position="157"/>
        <end position="166"/>
    </location>
</feature>
<feature type="region of interest" description="Disordered" evidence="4">
    <location>
        <begin position="54"/>
        <end position="124"/>
    </location>
</feature>
<feature type="region of interest" description="Requires for dimerization and lipid rafts association" evidence="2">
    <location>
        <begin position="137"/>
        <end position="141"/>
    </location>
</feature>
<feature type="region of interest" description="Requires for interaction with MSN and EZR" evidence="2">
    <location>
        <begin position="158"/>
        <end position="159"/>
    </location>
</feature>
<feature type="compositionally biased region" description="Basic and acidic residues" evidence="4">
    <location>
        <begin position="54"/>
        <end position="63"/>
    </location>
</feature>
<feature type="compositionally biased region" description="Basic and acidic residues" evidence="4">
    <location>
        <begin position="84"/>
        <end position="93"/>
    </location>
</feature>
<feature type="compositionally biased region" description="Polar residues" evidence="4">
    <location>
        <begin position="94"/>
        <end position="103"/>
    </location>
</feature>
<feature type="compositionally biased region" description="Basic and acidic residues" evidence="4">
    <location>
        <begin position="104"/>
        <end position="114"/>
    </location>
</feature>
<feature type="glycosylation site" description="O-linked (GalNAc...) threonine" evidence="3">
    <location>
        <position position="34"/>
    </location>
</feature>
<feature type="glycosylation site" description="O-linked (GalNAc...) threonine" evidence="2">
    <location>
        <position position="52"/>
    </location>
</feature>
<feature type="glycosylation site" description="O-linked (GalNAc...) threonine" evidence="3">
    <location>
        <position position="55"/>
    </location>
</feature>
<feature type="glycosylation site" description="O-linked (GalNAc...) threonine" evidence="3">
    <location>
        <position position="56"/>
    </location>
</feature>
<feature type="glycosylation site" description="O-linked (GalNAc...) serine" evidence="3">
    <location>
        <position position="62"/>
    </location>
</feature>
<feature type="glycosylation site" description="O-linked (GalNAc...) threonine" evidence="3">
    <location>
        <position position="63"/>
    </location>
</feature>
<feature type="glycosylation site" description="O-linked (GalNAc...) threonine" evidence="3">
    <location>
        <position position="71"/>
    </location>
</feature>
<feature type="glycosylation site" description="O-linked (GalNAc...) threonine" evidence="3">
    <location>
        <position position="80"/>
    </location>
</feature>
<feature type="glycosylation site" description="O-linked (GalNAc...) serine" evidence="3">
    <location>
        <position position="81"/>
    </location>
</feature>
<feature type="glycosylation site" description="O-linked (GalNAc...) threonine" evidence="3">
    <location>
        <position position="83"/>
    </location>
</feature>
<feature type="glycosylation site" description="O-linked (GalNAc...) serine" evidence="3">
    <location>
        <position position="84"/>
    </location>
</feature>
<feature type="glycosylation site" description="O-linked (GalNAc...) threonine" evidence="3">
    <location>
        <position position="94"/>
    </location>
</feature>
<feature type="glycosylation site" description="O-linked (GalNAc...) threonine" evidence="3">
    <location>
        <position position="95"/>
    </location>
</feature>
<feature type="glycosylation site" description="O-linked (GalNAc...) threonine" evidence="3">
    <location>
        <position position="96"/>
    </location>
</feature>
<feature type="glycosylation site" description="O-linked (GalNAc...) threonine" evidence="3">
    <location>
        <position position="101"/>
    </location>
</feature>
<feature type="glycosylation site" description="O-linked (GalNAc...) threonine" evidence="3">
    <location>
        <position position="105"/>
    </location>
</feature>
<feature type="glycosylation site" description="O-linked (GalNAc...) threonine" evidence="3">
    <location>
        <position position="109"/>
    </location>
</feature>
<feature type="glycosylation site" description="O-linked (GalNAc...) threonine" evidence="3">
    <location>
        <position position="110"/>
    </location>
</feature>
<feature type="sequence conflict" description="In Ref. 3; AAB86438 and 5; AAH72492." evidence="13" ref="3 5">
    <original>P</original>
    <variation>S</variation>
    <location>
        <position position="112"/>
    </location>
</feature>
<feature type="sequence conflict" description="In Ref. 4; AAB93880." evidence="13" ref="4">
    <original>LVG</original>
    <variation>WSA</variation>
    <location>
        <begin position="135"/>
        <end position="137"/>
    </location>
</feature>
<organism>
    <name type="scientific">Rattus norvegicus</name>
    <name type="common">Rat</name>
    <dbReference type="NCBI Taxonomy" id="10116"/>
    <lineage>
        <taxon>Eukaryota</taxon>
        <taxon>Metazoa</taxon>
        <taxon>Chordata</taxon>
        <taxon>Craniata</taxon>
        <taxon>Vertebrata</taxon>
        <taxon>Euteleostomi</taxon>
        <taxon>Mammalia</taxon>
        <taxon>Eutheria</taxon>
        <taxon>Euarchontoglires</taxon>
        <taxon>Glires</taxon>
        <taxon>Rodentia</taxon>
        <taxon>Myomorpha</taxon>
        <taxon>Muroidea</taxon>
        <taxon>Muridae</taxon>
        <taxon>Murinae</taxon>
        <taxon>Rattus</taxon>
    </lineage>
</organism>
<sequence>MWTAPVLLWVLGSVWFWDSAQGGAIGALEDDLVTPGPGDDMVNPGLEDRIETTDTTGELDKSTAKAPLVPTQPPIEELPTSGTSDHDHKEHESTTTVKAVTSHSTDKKTTHPNRDNAGGETQTTDKKDGLAVVTLVGIIIGVLLAIGFIGGIIIVVMRKISGRFSP</sequence>
<evidence type="ECO:0000250" key="1">
    <source>
        <dbReference type="UniProtKB" id="Q62011"/>
    </source>
</evidence>
<evidence type="ECO:0000250" key="2">
    <source>
        <dbReference type="UniProtKB" id="Q86YL7"/>
    </source>
</evidence>
<evidence type="ECO:0000255" key="3"/>
<evidence type="ECO:0000256" key="4">
    <source>
        <dbReference type="SAM" id="MobiDB-lite"/>
    </source>
</evidence>
<evidence type="ECO:0000269" key="5">
    <source>
    </source>
</evidence>
<evidence type="ECO:0000269" key="6">
    <source>
    </source>
</evidence>
<evidence type="ECO:0000269" key="7">
    <source>
    </source>
</evidence>
<evidence type="ECO:0000303" key="8">
    <source>
    </source>
</evidence>
<evidence type="ECO:0000303" key="9">
    <source>
    </source>
</evidence>
<evidence type="ECO:0000303" key="10">
    <source>
    </source>
</evidence>
<evidence type="ECO:0000303" key="11">
    <source>
    </source>
</evidence>
<evidence type="ECO:0000303" key="12">
    <source>
    </source>
</evidence>
<evidence type="ECO:0000305" key="13"/>
<evidence type="ECO:0000312" key="14">
    <source>
        <dbReference type="RGD" id="61819"/>
    </source>
</evidence>
<name>PDPN_RAT</name>